<name>3L22_BUNCA</name>
<feature type="signal peptide" evidence="3">
    <location>
        <begin position="1" status="less than"/>
        <end position="2"/>
    </location>
</feature>
<feature type="chain" id="PRO_5000189421" description="Alpha-elapitoxin-Bc2b" evidence="6">
    <location>
        <begin position="3"/>
        <end position="75"/>
    </location>
</feature>
<feature type="disulfide bond" evidence="2">
    <location>
        <begin position="5"/>
        <end position="24"/>
    </location>
</feature>
<feature type="disulfide bond" evidence="2">
    <location>
        <begin position="17"/>
        <end position="45"/>
    </location>
</feature>
<feature type="disulfide bond" evidence="2">
    <location>
        <begin position="30"/>
        <end position="34"/>
    </location>
</feature>
<feature type="disulfide bond" evidence="2">
    <location>
        <begin position="49"/>
        <end position="60"/>
    </location>
</feature>
<feature type="disulfide bond" evidence="2">
    <location>
        <begin position="61"/>
        <end position="66"/>
    </location>
</feature>
<feature type="non-terminal residue" evidence="7">
    <location>
        <position position="1"/>
    </location>
</feature>
<accession>A1IVR9</accession>
<protein>
    <recommendedName>
        <fullName evidence="5">Alpha-elapitoxin-Bc2b</fullName>
        <shortName evidence="5">Alpha-EPTX-Bc2b</shortName>
    </recommendedName>
    <alternativeName>
        <fullName evidence="7">Alpha-delta-Bgt-2</fullName>
    </alternativeName>
    <alternativeName>
        <fullName evidence="4">Alpha/delta-bungarotoxin-2</fullName>
        <shortName evidence="4">Alpha/delta-BgTx-2</shortName>
    </alternativeName>
</protein>
<evidence type="ECO:0000250" key="1">
    <source>
        <dbReference type="UniProtKB" id="A1IVR8"/>
    </source>
</evidence>
<evidence type="ECO:0000250" key="2">
    <source>
        <dbReference type="UniProtKB" id="P60615"/>
    </source>
</evidence>
<evidence type="ECO:0000269" key="3">
    <source>
    </source>
</evidence>
<evidence type="ECO:0000303" key="4">
    <source>
    </source>
</evidence>
<evidence type="ECO:0000305" key="5"/>
<evidence type="ECO:0000305" key="6">
    <source>
    </source>
</evidence>
<evidence type="ECO:0000312" key="7">
    <source>
        <dbReference type="EMBL" id="CAJ77820.1"/>
    </source>
</evidence>
<proteinExistence type="evidence at protein level"/>
<sequence length="75" mass="8418">YTLLCYKTPIPINAETCPPGENLCYTKMWCDIWCSSRGKVVELGCAATCPSKKPYEEVTCCSTDKCNPHPKQRPD</sequence>
<comment type="function">
    <text evidence="1 3">Binds to muscular and neuronal nicotinic acetylcholine receptor (nAChR) and inhibits acetylcholine from binding to the receptor, thereby impairing neuromuscular and neuronal transmission (PubMed:30944155). Blocks muscle type nAChR (PubMed:30944155). Also binds with high affinity to alpha-7/CHRNA7 nAChRs (By similarity). In addition, shows a weak inhibition of neuronal alpha-3-beta-2/CHRNA3-CHRNB2 nAChR (By similarity). Selectively binds to alpha-1-delta subunit interface of the mouse muscle nicotinic acetylcholine receptor, with a 10-fold higher affinity for the adult than for the fetal receptors (By similarity). In vivo, when intraperitoneally injected into mice, causes flaccid paralysis and respiratory distress, followed by death within 2-4 hours (By similarity).</text>
</comment>
<comment type="subunit">
    <text evidence="2">Monomer in solution, homodimer in crystal state.</text>
</comment>
<comment type="subcellular location">
    <subcellularLocation>
        <location evidence="1">Secreted</location>
    </subcellularLocation>
</comment>
<comment type="tissue specificity">
    <text evidence="5">Expressed by the venom gland.</text>
</comment>
<comment type="mass spectrometry" mass="8143.5" method="MALDI" evidence="3"/>
<comment type="similarity">
    <text evidence="5">Belongs to the three-finger toxin family. Long-chain subfamily. Type II alpha-neurotoxin sub-subfamily.</text>
</comment>
<keyword id="KW-0008">Acetylcholine receptor inhibiting toxin</keyword>
<keyword id="KW-0903">Direct protein sequencing</keyword>
<keyword id="KW-1015">Disulfide bond</keyword>
<keyword id="KW-0872">Ion channel impairing toxin</keyword>
<keyword id="KW-0528">Neurotoxin</keyword>
<keyword id="KW-0629">Postsynaptic neurotoxin</keyword>
<keyword id="KW-0964">Secreted</keyword>
<keyword id="KW-0732">Signal</keyword>
<keyword id="KW-0800">Toxin</keyword>
<dbReference type="EMBL" id="AM231682">
    <property type="protein sequence ID" value="CAJ77820.1"/>
    <property type="molecule type" value="Genomic_DNA"/>
</dbReference>
<dbReference type="SMR" id="A1IVR9"/>
<dbReference type="GO" id="GO:0005576">
    <property type="term" value="C:extracellular region"/>
    <property type="evidence" value="ECO:0007669"/>
    <property type="project" value="UniProtKB-SubCell"/>
</dbReference>
<dbReference type="GO" id="GO:0030550">
    <property type="term" value="F:acetylcholine receptor inhibitor activity"/>
    <property type="evidence" value="ECO:0007669"/>
    <property type="project" value="UniProtKB-KW"/>
</dbReference>
<dbReference type="GO" id="GO:0099106">
    <property type="term" value="F:ion channel regulator activity"/>
    <property type="evidence" value="ECO:0007669"/>
    <property type="project" value="UniProtKB-KW"/>
</dbReference>
<dbReference type="GO" id="GO:0090729">
    <property type="term" value="F:toxin activity"/>
    <property type="evidence" value="ECO:0007669"/>
    <property type="project" value="UniProtKB-KW"/>
</dbReference>
<dbReference type="CDD" id="cd00206">
    <property type="entry name" value="TFP_snake_toxin"/>
    <property type="match status" value="1"/>
</dbReference>
<dbReference type="Gene3D" id="2.10.60.10">
    <property type="entry name" value="CD59"/>
    <property type="match status" value="1"/>
</dbReference>
<dbReference type="InterPro" id="IPR003571">
    <property type="entry name" value="Snake_3FTx"/>
</dbReference>
<dbReference type="InterPro" id="IPR045860">
    <property type="entry name" value="Snake_toxin-like_sf"/>
</dbReference>
<dbReference type="InterPro" id="IPR018354">
    <property type="entry name" value="Snake_toxin_con_site"/>
</dbReference>
<dbReference type="InterPro" id="IPR054131">
    <property type="entry name" value="Toxin_cobra-type"/>
</dbReference>
<dbReference type="Pfam" id="PF21947">
    <property type="entry name" value="Toxin_cobra-type"/>
    <property type="match status" value="1"/>
</dbReference>
<dbReference type="SUPFAM" id="SSF57302">
    <property type="entry name" value="Snake toxin-like"/>
    <property type="match status" value="1"/>
</dbReference>
<dbReference type="PROSITE" id="PS00272">
    <property type="entry name" value="SNAKE_TOXIN"/>
    <property type="match status" value="1"/>
</dbReference>
<reference key="1">
    <citation type="journal article" date="2019" name="Biochem. J.">
        <title>Novel long-chain neurotoxins from Bungarus candidus distinguish the two binding sites in muscle-type nicotinic acetylcholine receptors.</title>
        <authorList>
            <person name="Utkin Y.N."/>
            <person name="Kuch U."/>
            <person name="Kasheverov I.E."/>
            <person name="Lebedev D.S."/>
            <person name="Cederlund E."/>
            <person name="Molles B.E."/>
            <person name="Polyak I."/>
            <person name="Ivanov I.A."/>
            <person name="Prokopev N.A."/>
            <person name="Ziganshin R.H."/>
            <person name="Jornvall H."/>
            <person name="Alvelius G."/>
            <person name="Chanhome L."/>
            <person name="Warrell D.A."/>
            <person name="Mebs D."/>
            <person name="Bergman T."/>
            <person name="Tsetlin V.I."/>
        </authorList>
    </citation>
    <scope>NUCLEOTIDE SEQUENCE [GENOMIC DNA]</scope>
    <scope>PROTEIN SEQUENCE OF 3-37 AND 40-71</scope>
    <scope>FUNCTION</scope>
    <scope>MASS SPECTROMETRY</scope>
    <source>
        <tissue>Venom</tissue>
    </source>
</reference>
<organism>
    <name type="scientific">Bungarus candidus</name>
    <name type="common">Malayan krait</name>
    <dbReference type="NCBI Taxonomy" id="92438"/>
    <lineage>
        <taxon>Eukaryota</taxon>
        <taxon>Metazoa</taxon>
        <taxon>Chordata</taxon>
        <taxon>Craniata</taxon>
        <taxon>Vertebrata</taxon>
        <taxon>Euteleostomi</taxon>
        <taxon>Lepidosauria</taxon>
        <taxon>Squamata</taxon>
        <taxon>Bifurcata</taxon>
        <taxon>Unidentata</taxon>
        <taxon>Episquamata</taxon>
        <taxon>Toxicofera</taxon>
        <taxon>Serpentes</taxon>
        <taxon>Colubroidea</taxon>
        <taxon>Elapidae</taxon>
        <taxon>Bungarinae</taxon>
        <taxon>Bungarus</taxon>
    </lineage>
</organism>